<reference key="1">
    <citation type="journal article" date="2006" name="J. Bacteriol.">
        <title>Chromosome rearrangement and diversification of Francisella tularensis revealed by the type B (OSU18) genome sequence.</title>
        <authorList>
            <person name="Petrosino J.F."/>
            <person name="Xiang Q."/>
            <person name="Karpathy S.E."/>
            <person name="Jiang H."/>
            <person name="Yerrapragada S."/>
            <person name="Liu Y."/>
            <person name="Gioia J."/>
            <person name="Hemphill L."/>
            <person name="Gonzalez A."/>
            <person name="Raghavan T.M."/>
            <person name="Uzman A."/>
            <person name="Fox G.E."/>
            <person name="Highlander S."/>
            <person name="Reichard M."/>
            <person name="Morton R.J."/>
            <person name="Clinkenbeard K.D."/>
            <person name="Weinstock G.M."/>
        </authorList>
    </citation>
    <scope>NUCLEOTIDE SEQUENCE [LARGE SCALE GENOMIC DNA]</scope>
    <source>
        <strain>OSU18</strain>
    </source>
</reference>
<keyword id="KW-0067">ATP-binding</keyword>
<keyword id="KW-0997">Cell inner membrane</keyword>
<keyword id="KW-1003">Cell membrane</keyword>
<keyword id="KW-0472">Membrane</keyword>
<keyword id="KW-0547">Nucleotide-binding</keyword>
<keyword id="KW-1278">Translocase</keyword>
<keyword id="KW-0813">Transport</keyword>
<gene>
    <name evidence="1" type="primary">lolD</name>
    <name type="ordered locus">FTH_0473</name>
</gene>
<organism>
    <name type="scientific">Francisella tularensis subsp. holarctica (strain OSU18)</name>
    <dbReference type="NCBI Taxonomy" id="393011"/>
    <lineage>
        <taxon>Bacteria</taxon>
        <taxon>Pseudomonadati</taxon>
        <taxon>Pseudomonadota</taxon>
        <taxon>Gammaproteobacteria</taxon>
        <taxon>Thiotrichales</taxon>
        <taxon>Francisellaceae</taxon>
        <taxon>Francisella</taxon>
    </lineage>
</organism>
<feature type="chain" id="PRO_0000272086" description="Lipoprotein-releasing system ATP-binding protein LolD">
    <location>
        <begin position="1"/>
        <end position="231"/>
    </location>
</feature>
<feature type="domain" description="ABC transporter" evidence="1">
    <location>
        <begin position="6"/>
        <end position="230"/>
    </location>
</feature>
<feature type="binding site" evidence="1">
    <location>
        <begin position="42"/>
        <end position="49"/>
    </location>
    <ligand>
        <name>ATP</name>
        <dbReference type="ChEBI" id="CHEBI:30616"/>
    </ligand>
</feature>
<evidence type="ECO:0000255" key="1">
    <source>
        <dbReference type="HAMAP-Rule" id="MF_01708"/>
    </source>
</evidence>
<sequence>MNDVVLSCKNVSKKYTEFKTDIAILKDVNLEIKKGEKVAILGLSGSGKTTLLNVLGGLDKCSAGEVYLMGERFDNQSVNKRAKMRNKHLGFIYQLHHLLPEFTAIENVMIPLAITKKYTKKESIKLANEILKKVGLDHRADHKPAELSGGERQRVAIARALVTNPNCILADEPTGNLDSQRSESIFALMQQLSDDFGISFVIVTHDEKLASRMNKIYRLVDGELELVINSN</sequence>
<protein>
    <recommendedName>
        <fullName evidence="1">Lipoprotein-releasing system ATP-binding protein LolD</fullName>
        <ecNumber evidence="1">7.6.2.-</ecNumber>
    </recommendedName>
</protein>
<name>LOLD_FRATO</name>
<dbReference type="EC" id="7.6.2.-" evidence="1"/>
<dbReference type="EMBL" id="CP000437">
    <property type="protein sequence ID" value="ABI82459.1"/>
    <property type="molecule type" value="Genomic_DNA"/>
</dbReference>
<dbReference type="RefSeq" id="WP_011648600.1">
    <property type="nucleotide sequence ID" value="NC_017463.1"/>
</dbReference>
<dbReference type="SMR" id="Q0BN75"/>
<dbReference type="KEGG" id="fth:FTH_0473"/>
<dbReference type="GO" id="GO:0005886">
    <property type="term" value="C:plasma membrane"/>
    <property type="evidence" value="ECO:0007669"/>
    <property type="project" value="UniProtKB-SubCell"/>
</dbReference>
<dbReference type="GO" id="GO:0005524">
    <property type="term" value="F:ATP binding"/>
    <property type="evidence" value="ECO:0007669"/>
    <property type="project" value="UniProtKB-KW"/>
</dbReference>
<dbReference type="GO" id="GO:0016887">
    <property type="term" value="F:ATP hydrolysis activity"/>
    <property type="evidence" value="ECO:0007669"/>
    <property type="project" value="InterPro"/>
</dbReference>
<dbReference type="GO" id="GO:0022857">
    <property type="term" value="F:transmembrane transporter activity"/>
    <property type="evidence" value="ECO:0007669"/>
    <property type="project" value="TreeGrafter"/>
</dbReference>
<dbReference type="GO" id="GO:0044874">
    <property type="term" value="P:lipoprotein localization to outer membrane"/>
    <property type="evidence" value="ECO:0007669"/>
    <property type="project" value="TreeGrafter"/>
</dbReference>
<dbReference type="GO" id="GO:0089705">
    <property type="term" value="P:protein localization to outer membrane"/>
    <property type="evidence" value="ECO:0007669"/>
    <property type="project" value="TreeGrafter"/>
</dbReference>
<dbReference type="CDD" id="cd03255">
    <property type="entry name" value="ABC_MJ0796_LolCDE_FtsE"/>
    <property type="match status" value="1"/>
</dbReference>
<dbReference type="FunFam" id="3.40.50.300:FF:000230">
    <property type="entry name" value="Lipoprotein-releasing system ATP-binding protein LolD"/>
    <property type="match status" value="1"/>
</dbReference>
<dbReference type="Gene3D" id="3.40.50.300">
    <property type="entry name" value="P-loop containing nucleotide triphosphate hydrolases"/>
    <property type="match status" value="1"/>
</dbReference>
<dbReference type="InterPro" id="IPR003593">
    <property type="entry name" value="AAA+_ATPase"/>
</dbReference>
<dbReference type="InterPro" id="IPR003439">
    <property type="entry name" value="ABC_transporter-like_ATP-bd"/>
</dbReference>
<dbReference type="InterPro" id="IPR017871">
    <property type="entry name" value="ABC_transporter-like_CS"/>
</dbReference>
<dbReference type="InterPro" id="IPR015854">
    <property type="entry name" value="ABC_transpr_LolD-like"/>
</dbReference>
<dbReference type="InterPro" id="IPR011924">
    <property type="entry name" value="LolD_lipo_ATP-bd"/>
</dbReference>
<dbReference type="InterPro" id="IPR017911">
    <property type="entry name" value="MacB-like_ATP-bd"/>
</dbReference>
<dbReference type="InterPro" id="IPR027417">
    <property type="entry name" value="P-loop_NTPase"/>
</dbReference>
<dbReference type="NCBIfam" id="TIGR02211">
    <property type="entry name" value="LolD_lipo_ex"/>
    <property type="match status" value="1"/>
</dbReference>
<dbReference type="PANTHER" id="PTHR24220">
    <property type="entry name" value="IMPORT ATP-BINDING PROTEIN"/>
    <property type="match status" value="1"/>
</dbReference>
<dbReference type="PANTHER" id="PTHR24220:SF689">
    <property type="entry name" value="LIPOPROTEIN-RELEASING SYSTEM ATP-BINDING PROTEIN LOLD"/>
    <property type="match status" value="1"/>
</dbReference>
<dbReference type="Pfam" id="PF00005">
    <property type="entry name" value="ABC_tran"/>
    <property type="match status" value="1"/>
</dbReference>
<dbReference type="SMART" id="SM00382">
    <property type="entry name" value="AAA"/>
    <property type="match status" value="1"/>
</dbReference>
<dbReference type="SUPFAM" id="SSF52540">
    <property type="entry name" value="P-loop containing nucleoside triphosphate hydrolases"/>
    <property type="match status" value="1"/>
</dbReference>
<dbReference type="PROSITE" id="PS00211">
    <property type="entry name" value="ABC_TRANSPORTER_1"/>
    <property type="match status" value="1"/>
</dbReference>
<dbReference type="PROSITE" id="PS50893">
    <property type="entry name" value="ABC_TRANSPORTER_2"/>
    <property type="match status" value="1"/>
</dbReference>
<dbReference type="PROSITE" id="PS51244">
    <property type="entry name" value="LOLD"/>
    <property type="match status" value="1"/>
</dbReference>
<comment type="function">
    <text evidence="1">Part of the ABC transporter complex LolCDE involved in the translocation of mature outer membrane-directed lipoproteins, from the inner membrane to the periplasmic chaperone, LolA. Responsible for the formation of the LolA-lipoprotein complex in an ATP-dependent manner.</text>
</comment>
<comment type="subunit">
    <text evidence="1">The complex is composed of two ATP-binding proteins (LolD) and two transmembrane proteins (LolC and LolE).</text>
</comment>
<comment type="subcellular location">
    <subcellularLocation>
        <location evidence="1">Cell inner membrane</location>
        <topology evidence="1">Peripheral membrane protein</topology>
    </subcellularLocation>
</comment>
<comment type="similarity">
    <text evidence="1">Belongs to the ABC transporter superfamily. Lipoprotein translocase (TC 3.A.1.125) family.</text>
</comment>
<proteinExistence type="inferred from homology"/>
<accession>Q0BN75</accession>